<protein>
    <recommendedName>
        <fullName evidence="1">Phosphoribosylformylglycinamidine cyclo-ligase</fullName>
        <ecNumber evidence="1">6.3.3.1</ecNumber>
    </recommendedName>
    <alternativeName>
        <fullName evidence="1">AIR synthase</fullName>
    </alternativeName>
    <alternativeName>
        <fullName evidence="1">AIRS</fullName>
    </alternativeName>
    <alternativeName>
        <fullName evidence="1">Phosphoribosyl-aminoimidazole synthetase</fullName>
    </alternativeName>
</protein>
<proteinExistence type="inferred from homology"/>
<dbReference type="EC" id="6.3.3.1" evidence="1"/>
<dbReference type="EMBL" id="AE017333">
    <property type="protein sequence ID" value="AAU39638.1"/>
    <property type="molecule type" value="Genomic_DNA"/>
</dbReference>
<dbReference type="EMBL" id="CP000002">
    <property type="protein sequence ID" value="AAU22287.1"/>
    <property type="molecule type" value="Genomic_DNA"/>
</dbReference>
<dbReference type="RefSeq" id="WP_011197613.1">
    <property type="nucleotide sequence ID" value="NC_006322.1"/>
</dbReference>
<dbReference type="SMR" id="Q65MS6"/>
<dbReference type="STRING" id="279010.BL01484"/>
<dbReference type="GeneID" id="92862718"/>
<dbReference type="KEGG" id="bld:BLi00701"/>
<dbReference type="KEGG" id="bli:BL01484"/>
<dbReference type="PATRIC" id="fig|279010.13.peg.688"/>
<dbReference type="eggNOG" id="COG0150">
    <property type="taxonomic scope" value="Bacteria"/>
</dbReference>
<dbReference type="HOGENOM" id="CLU_047116_0_0_9"/>
<dbReference type="UniPathway" id="UPA00074">
    <property type="reaction ID" value="UER00129"/>
</dbReference>
<dbReference type="Proteomes" id="UP000000606">
    <property type="component" value="Chromosome"/>
</dbReference>
<dbReference type="Bgee" id="BL01484">
    <property type="expression patterns" value="Expressed in blastula and 7 other cell types or tissues"/>
</dbReference>
<dbReference type="GO" id="GO:0005829">
    <property type="term" value="C:cytosol"/>
    <property type="evidence" value="ECO:0007669"/>
    <property type="project" value="TreeGrafter"/>
</dbReference>
<dbReference type="GO" id="GO:0005524">
    <property type="term" value="F:ATP binding"/>
    <property type="evidence" value="ECO:0007669"/>
    <property type="project" value="UniProtKB-KW"/>
</dbReference>
<dbReference type="GO" id="GO:0004637">
    <property type="term" value="F:phosphoribosylamine-glycine ligase activity"/>
    <property type="evidence" value="ECO:0007669"/>
    <property type="project" value="TreeGrafter"/>
</dbReference>
<dbReference type="GO" id="GO:0004641">
    <property type="term" value="F:phosphoribosylformylglycinamidine cyclo-ligase activity"/>
    <property type="evidence" value="ECO:0007669"/>
    <property type="project" value="UniProtKB-UniRule"/>
</dbReference>
<dbReference type="GO" id="GO:0006189">
    <property type="term" value="P:'de novo' IMP biosynthetic process"/>
    <property type="evidence" value="ECO:0007669"/>
    <property type="project" value="UniProtKB-UniRule"/>
</dbReference>
<dbReference type="GO" id="GO:0046084">
    <property type="term" value="P:adenine biosynthetic process"/>
    <property type="evidence" value="ECO:0007669"/>
    <property type="project" value="TreeGrafter"/>
</dbReference>
<dbReference type="CDD" id="cd02196">
    <property type="entry name" value="PurM"/>
    <property type="match status" value="1"/>
</dbReference>
<dbReference type="FunFam" id="3.30.1330.10:FF:000001">
    <property type="entry name" value="Phosphoribosylformylglycinamidine cyclo-ligase"/>
    <property type="match status" value="1"/>
</dbReference>
<dbReference type="FunFam" id="3.90.650.10:FF:000001">
    <property type="entry name" value="Phosphoribosylformylglycinamidine cyclo-ligase"/>
    <property type="match status" value="1"/>
</dbReference>
<dbReference type="Gene3D" id="3.90.650.10">
    <property type="entry name" value="PurM-like C-terminal domain"/>
    <property type="match status" value="1"/>
</dbReference>
<dbReference type="Gene3D" id="3.30.1330.10">
    <property type="entry name" value="PurM-like, N-terminal domain"/>
    <property type="match status" value="1"/>
</dbReference>
<dbReference type="HAMAP" id="MF_00741">
    <property type="entry name" value="AIRS"/>
    <property type="match status" value="1"/>
</dbReference>
<dbReference type="InterPro" id="IPR010918">
    <property type="entry name" value="PurM-like_C_dom"/>
</dbReference>
<dbReference type="InterPro" id="IPR036676">
    <property type="entry name" value="PurM-like_C_sf"/>
</dbReference>
<dbReference type="InterPro" id="IPR016188">
    <property type="entry name" value="PurM-like_N"/>
</dbReference>
<dbReference type="InterPro" id="IPR036921">
    <property type="entry name" value="PurM-like_N_sf"/>
</dbReference>
<dbReference type="InterPro" id="IPR004733">
    <property type="entry name" value="PurM_cligase"/>
</dbReference>
<dbReference type="NCBIfam" id="TIGR00878">
    <property type="entry name" value="purM"/>
    <property type="match status" value="1"/>
</dbReference>
<dbReference type="PANTHER" id="PTHR10520:SF12">
    <property type="entry name" value="TRIFUNCTIONAL PURINE BIOSYNTHETIC PROTEIN ADENOSINE-3"/>
    <property type="match status" value="1"/>
</dbReference>
<dbReference type="PANTHER" id="PTHR10520">
    <property type="entry name" value="TRIFUNCTIONAL PURINE BIOSYNTHETIC PROTEIN ADENOSINE-3-RELATED"/>
    <property type="match status" value="1"/>
</dbReference>
<dbReference type="Pfam" id="PF00586">
    <property type="entry name" value="AIRS"/>
    <property type="match status" value="1"/>
</dbReference>
<dbReference type="Pfam" id="PF02769">
    <property type="entry name" value="AIRS_C"/>
    <property type="match status" value="1"/>
</dbReference>
<dbReference type="SUPFAM" id="SSF56042">
    <property type="entry name" value="PurM C-terminal domain-like"/>
    <property type="match status" value="1"/>
</dbReference>
<dbReference type="SUPFAM" id="SSF55326">
    <property type="entry name" value="PurM N-terminal domain-like"/>
    <property type="match status" value="1"/>
</dbReference>
<evidence type="ECO:0000255" key="1">
    <source>
        <dbReference type="HAMAP-Rule" id="MF_00741"/>
    </source>
</evidence>
<evidence type="ECO:0000305" key="2"/>
<comment type="catalytic activity">
    <reaction evidence="1">
        <text>2-formamido-N(1)-(5-O-phospho-beta-D-ribosyl)acetamidine + ATP = 5-amino-1-(5-phospho-beta-D-ribosyl)imidazole + ADP + phosphate + H(+)</text>
        <dbReference type="Rhea" id="RHEA:23032"/>
        <dbReference type="ChEBI" id="CHEBI:15378"/>
        <dbReference type="ChEBI" id="CHEBI:30616"/>
        <dbReference type="ChEBI" id="CHEBI:43474"/>
        <dbReference type="ChEBI" id="CHEBI:137981"/>
        <dbReference type="ChEBI" id="CHEBI:147287"/>
        <dbReference type="ChEBI" id="CHEBI:456216"/>
        <dbReference type="EC" id="6.3.3.1"/>
    </reaction>
</comment>
<comment type="pathway">
    <text evidence="1">Purine metabolism; IMP biosynthesis via de novo pathway; 5-amino-1-(5-phospho-D-ribosyl)imidazole from N(2)-formyl-N(1)-(5-phospho-D-ribosyl)glycinamide: step 2/2.</text>
</comment>
<comment type="subcellular location">
    <subcellularLocation>
        <location evidence="1">Cytoplasm</location>
    </subcellularLocation>
</comment>
<comment type="similarity">
    <text evidence="1">Belongs to the AIR synthase family.</text>
</comment>
<accession>Q65MS6</accession>
<accession>Q62Y71</accession>
<name>PUR5_BACLD</name>
<reference key="1">
    <citation type="journal article" date="2004" name="J. Mol. Microbiol. Biotechnol.">
        <title>The complete genome sequence of Bacillus licheniformis DSM13, an organism with great industrial potential.</title>
        <authorList>
            <person name="Veith B."/>
            <person name="Herzberg C."/>
            <person name="Steckel S."/>
            <person name="Feesche J."/>
            <person name="Maurer K.H."/>
            <person name="Ehrenreich P."/>
            <person name="Baeumer S."/>
            <person name="Henne A."/>
            <person name="Liesegang H."/>
            <person name="Merkl R."/>
            <person name="Ehrenreich A."/>
            <person name="Gottschalk G."/>
        </authorList>
    </citation>
    <scope>NUCLEOTIDE SEQUENCE [LARGE SCALE GENOMIC DNA]</scope>
    <source>
        <strain>ATCC 14580 / DSM 13 / JCM 2505 / CCUG 7422 / NBRC 12200 / NCIMB 9375 / NCTC 10341 / NRRL NRS-1264 / Gibson 46</strain>
    </source>
</reference>
<reference key="2">
    <citation type="journal article" date="2004" name="Genome Biol.">
        <title>Complete genome sequence of the industrial bacterium Bacillus licheniformis and comparisons with closely related Bacillus species.</title>
        <authorList>
            <person name="Rey M.W."/>
            <person name="Ramaiya P."/>
            <person name="Nelson B.A."/>
            <person name="Brody-Karpin S.D."/>
            <person name="Zaretsky E.J."/>
            <person name="Tang M."/>
            <person name="Lopez de Leon A."/>
            <person name="Xiang H."/>
            <person name="Gusti V."/>
            <person name="Clausen I.G."/>
            <person name="Olsen P.B."/>
            <person name="Rasmussen M.D."/>
            <person name="Andersen J.T."/>
            <person name="Joergensen P.L."/>
            <person name="Larsen T.S."/>
            <person name="Sorokin A."/>
            <person name="Bolotin A."/>
            <person name="Lapidus A."/>
            <person name="Galleron N."/>
            <person name="Ehrlich S.D."/>
            <person name="Berka R.M."/>
        </authorList>
    </citation>
    <scope>NUCLEOTIDE SEQUENCE [LARGE SCALE GENOMIC DNA]</scope>
    <source>
        <strain>ATCC 14580 / DSM 13 / JCM 2505 / CCUG 7422 / NBRC 12200 / NCIMB 9375 / NCTC 10341 / NRRL NRS-1264 / Gibson 46</strain>
    </source>
</reference>
<keyword id="KW-0067">ATP-binding</keyword>
<keyword id="KW-0963">Cytoplasm</keyword>
<keyword id="KW-0436">Ligase</keyword>
<keyword id="KW-0547">Nucleotide-binding</keyword>
<keyword id="KW-0658">Purine biosynthesis</keyword>
<keyword id="KW-1185">Reference proteome</keyword>
<gene>
    <name evidence="1" type="primary">purM</name>
    <name type="ordered locus">BLi00701</name>
    <name type="ordered locus">BL01484</name>
</gene>
<sequence length="346" mass="36584">MSESYKNAGVDIEAGYEAVKRMKKHVERTKRIGAMGGLGGFGGMFDLSELPYKQPVLISGTDGVGTKLKLAFAMDKHDTIGIDAVAMCVNDVLAQGAEPLFFLDYLAVGKADPVKIEEIVKGVAEGCVQSGSALVGGETAEMPGLYTEDEYDIAGFSVGAAEKDGIVTGENISEGHLLIGLSSSGLHSNGFSLVRKVLLEDAGLNLDETYAPFERPLGEELLEPTKIYVKPVLEAVKSGKIAGMAHVTGGGFIENLPRMMPDGLGVEIDIGSWPVPPIFPFIQEKGGLKSEEMFNVFNMGIGFVLAVKEEDMTDVIQTLENNGEKAYLIGRVKAGSGVVFGGAGLS</sequence>
<feature type="chain" id="PRO_0000258331" description="Phosphoribosylformylglycinamidine cyclo-ligase">
    <location>
        <begin position="1"/>
        <end position="346"/>
    </location>
</feature>
<feature type="sequence conflict" description="In Ref. 1; AAU39638." evidence="2" ref="1">
    <original>M</original>
    <variation>ML</variation>
    <location>
        <position position="1"/>
    </location>
</feature>
<organism>
    <name type="scientific">Bacillus licheniformis (strain ATCC 14580 / DSM 13 / JCM 2505 / CCUG 7422 / NBRC 12200 / NCIMB 9375 / NCTC 10341 / NRRL NRS-1264 / Gibson 46)</name>
    <dbReference type="NCBI Taxonomy" id="279010"/>
    <lineage>
        <taxon>Bacteria</taxon>
        <taxon>Bacillati</taxon>
        <taxon>Bacillota</taxon>
        <taxon>Bacilli</taxon>
        <taxon>Bacillales</taxon>
        <taxon>Bacillaceae</taxon>
        <taxon>Bacillus</taxon>
    </lineage>
</organism>